<organism>
    <name type="scientific">Homo sapiens</name>
    <name type="common">Human</name>
    <dbReference type="NCBI Taxonomy" id="9606"/>
    <lineage>
        <taxon>Eukaryota</taxon>
        <taxon>Metazoa</taxon>
        <taxon>Chordata</taxon>
        <taxon>Craniata</taxon>
        <taxon>Vertebrata</taxon>
        <taxon>Euteleostomi</taxon>
        <taxon>Mammalia</taxon>
        <taxon>Eutheria</taxon>
        <taxon>Euarchontoglires</taxon>
        <taxon>Primates</taxon>
        <taxon>Haplorrhini</taxon>
        <taxon>Catarrhini</taxon>
        <taxon>Hominidae</taxon>
        <taxon>Homo</taxon>
    </lineage>
</organism>
<name>COE2_HUMAN</name>
<sequence length="575" mass="62650">MFGIQDTLGRGPTLKEKSLGAEMDSVRSWVRNVGVVDANVAAQSGVALSRAHFEKQPPSNLRKSNFFHFVLALYDRQGQPVEIERTAFVDFVENDKEQGNEKTNNGTHYKLQLLYSNGVRTEQDLYVRLIDSVTKQPIAYEGQNKNPEMCRVLLTHEVMCSRCCEKKSCGNRNETPSDPVIIDRFFLKFFLKCNQNCLKTAGNPRDMRRFQVVLSTTVNVDGHVLAVSDNMFVHNNSKHGRRARRLDPSEATPCIKAISPSEGWTTGGAMVIIIGDNFFDGLQVVFGTMLVWSELITPHAIRVQTPPRHIPGVVEVTLSYKSKQFCKGAPGRFIYTALNEPTIDYGFQRLQKVIPRHPGDPERLAKEMLLKRAADLVEALYGTPHNNQDIILKRAADIAEALYSVPRNPSQLPALSSSPAHSGMMGINSYGSQLGVSISESTQGNNQGYIRNTSSISPRGYSSSSTPQQSNYSTSSNSMNGYSNVPMANLGVPGSPGFLNGSPTGSPYGIMSSSPTVGSSSTSSILPFSSSVFPAVKQKSAFAPVIRPQGSPSPACSSGNGNGFRAMTGLVVPPM</sequence>
<comment type="function">
    <text evidence="1">Transcription factor that, in osteoblasts, activates the decoy receptor for RANKL, TNFRSF11B, which in turn regulates osteoclast differentiation. Acts in synergy with the Wnt-responsive LEF1/CTNNB1 pathway. Recognizes variations of the palindromic sequence 5'-ATTCCCNNGGGAATT-3' (By similarity).</text>
</comment>
<comment type="subunit">
    <text evidence="1 2 5">Forms either a homodimer or a heterodimer with a related family member (By similarity). Interacts with SIX1 (PubMed:27923061).</text>
</comment>
<comment type="interaction">
    <interactant intactId="EBI-12267154">
        <id>Q9HAK2</id>
    </interactant>
    <interactant intactId="EBI-17233744">
        <id>Q9H4W6-2</id>
        <label>EBF3</label>
    </interactant>
    <organismsDiffer>false</organismsDiffer>
    <experiments>3</experiments>
</comment>
<comment type="interaction">
    <interactant intactId="EBI-12267154">
        <id>Q9HAK2</id>
    </interactant>
    <interactant intactId="EBI-359224">
        <id>Q13077</id>
        <label>TRAF1</label>
    </interactant>
    <organismsDiffer>false</organismsDiffer>
    <experiments>3</experiments>
</comment>
<comment type="interaction">
    <interactant intactId="EBI-12267154">
        <id>Q9HAK2</id>
    </interactant>
    <interactant intactId="EBI-355744">
        <id>Q12933</id>
        <label>TRAF2</label>
    </interactant>
    <organismsDiffer>false</organismsDiffer>
    <experiments>3</experiments>
</comment>
<comment type="subcellular location">
    <subcellularLocation>
        <location evidence="7">Nucleus</location>
    </subcellularLocation>
</comment>
<comment type="alternative products">
    <event type="alternative splicing"/>
    <isoform>
        <id>Q9HAK2-1</id>
        <name>1</name>
        <sequence type="displayed"/>
    </isoform>
    <isoform>
        <id>Q9HAK2-2</id>
        <name>2</name>
        <sequence type="described" ref="VSP_055530 VSP_055531"/>
    </isoform>
</comment>
<comment type="similarity">
    <text evidence="7">Belongs to the COE family.</text>
</comment>
<comment type="sequence caution" evidence="7">
    <conflict type="erroneous initiation">
        <sequence resource="EMBL-CDS" id="BAB13843"/>
    </conflict>
</comment>
<keyword id="KW-0010">Activator</keyword>
<keyword id="KW-0025">Alternative splicing</keyword>
<keyword id="KW-0217">Developmental protein</keyword>
<keyword id="KW-0238">DNA-binding</keyword>
<keyword id="KW-0479">Metal-binding</keyword>
<keyword id="KW-0539">Nucleus</keyword>
<keyword id="KW-1267">Proteomics identification</keyword>
<keyword id="KW-1185">Reference proteome</keyword>
<keyword id="KW-0804">Transcription</keyword>
<keyword id="KW-0805">Transcription regulation</keyword>
<keyword id="KW-0862">Zinc</keyword>
<keyword id="KW-0863">Zinc-finger</keyword>
<proteinExistence type="evidence at protein level"/>
<gene>
    <name type="primary">EBF2</name>
    <name type="synonym">COE2</name>
</gene>
<protein>
    <recommendedName>
        <fullName>Transcription factor COE2</fullName>
    </recommendedName>
    <alternativeName>
        <fullName>Early B-cell factor 2</fullName>
        <shortName>EBF-2</shortName>
    </alternativeName>
</protein>
<feature type="chain" id="PRO_0000107828" description="Transcription factor COE2">
    <location>
        <begin position="1"/>
        <end position="575"/>
    </location>
</feature>
<feature type="domain" description="IPT/TIG">
    <location>
        <begin position="253"/>
        <end position="336"/>
    </location>
</feature>
<feature type="zinc finger region" description="C5-type" evidence="3">
    <location>
        <begin position="150"/>
        <end position="169"/>
    </location>
</feature>
<feature type="region of interest" description="Interaction with DNA" evidence="1">
    <location>
        <begin position="62"/>
        <end position="65"/>
    </location>
</feature>
<feature type="region of interest" description="Interaction with DNA" evidence="1">
    <location>
        <begin position="196"/>
        <end position="203"/>
    </location>
</feature>
<feature type="region of interest" description="Interaction with DNA" evidence="1">
    <location>
        <begin position="235"/>
        <end position="238"/>
    </location>
</feature>
<feature type="region of interest" description="Disordered" evidence="4">
    <location>
        <begin position="441"/>
        <end position="479"/>
    </location>
</feature>
<feature type="compositionally biased region" description="Polar residues" evidence="4">
    <location>
        <begin position="441"/>
        <end position="453"/>
    </location>
</feature>
<feature type="compositionally biased region" description="Low complexity" evidence="4">
    <location>
        <begin position="454"/>
        <end position="479"/>
    </location>
</feature>
<feature type="site" description="Interaction with DNA" evidence="1">
    <location>
        <position position="162"/>
    </location>
</feature>
<feature type="site" description="Interaction with DNA" evidence="1">
    <location>
        <position position="171"/>
    </location>
</feature>
<feature type="splice variant" id="VSP_055530" description="In isoform 2." evidence="6">
    <location>
        <begin position="1"/>
        <end position="269"/>
    </location>
</feature>
<feature type="splice variant" id="VSP_055531" description="In isoform 2." evidence="6">
    <original>IMSSSPTVGSSSTSSILPFSSSVFPAVKQKSAFAPVIRPQGSPSPACSSGNGNGFRAMTGLVVPPM</original>
    <variation>TGLWLTWLLKAFWGKKRIETIPFL</variation>
    <location>
        <begin position="510"/>
        <end position="575"/>
    </location>
</feature>
<feature type="sequence variant" id="VAR_048754" description="In dbSNP:rs17054477.">
    <original>G</original>
    <variation>S</variation>
    <location>
        <position position="559"/>
    </location>
</feature>
<feature type="sequence conflict" description="In Ref. 1; AAU10086." evidence="7" ref="1">
    <original>S</original>
    <variation>G</variation>
    <location>
        <position position="483"/>
    </location>
</feature>
<feature type="sequence conflict" description="In Ref. 3; BAB13843." evidence="7" ref="3">
    <original>S</original>
    <variation>L</variation>
    <location>
        <position position="513"/>
    </location>
</feature>
<evidence type="ECO:0000250" key="1"/>
<evidence type="ECO:0000250" key="2">
    <source>
        <dbReference type="UniProtKB" id="O08792"/>
    </source>
</evidence>
<evidence type="ECO:0000255" key="3"/>
<evidence type="ECO:0000256" key="4">
    <source>
        <dbReference type="SAM" id="MobiDB-lite"/>
    </source>
</evidence>
<evidence type="ECO:0000269" key="5">
    <source>
    </source>
</evidence>
<evidence type="ECO:0000303" key="6">
    <source ref="1"/>
</evidence>
<evidence type="ECO:0000305" key="7"/>
<accession>Q9HAK2</accession>
<accession>A0PJM4</accession>
<accession>A6NMF7</accession>
<accession>F5H645</accession>
<accession>Q66VZ3</accession>
<accession>Q6DK36</accession>
<accession>Q6IS86</accession>
<accession>Q6ISA4</accession>
<dbReference type="EMBL" id="AY700779">
    <property type="protein sequence ID" value="AAU10086.1"/>
    <property type="molecule type" value="mRNA"/>
</dbReference>
<dbReference type="EMBL" id="AC023566">
    <property type="status" value="NOT_ANNOTATED_CDS"/>
    <property type="molecule type" value="Genomic_DNA"/>
</dbReference>
<dbReference type="EMBL" id="AC090103">
    <property type="status" value="NOT_ANNOTATED_CDS"/>
    <property type="molecule type" value="Genomic_DNA"/>
</dbReference>
<dbReference type="EMBL" id="AK021562">
    <property type="protein sequence ID" value="BAB13843.1"/>
    <property type="status" value="ALT_INIT"/>
    <property type="molecule type" value="mRNA"/>
</dbReference>
<dbReference type="EMBL" id="BC069665">
    <property type="protein sequence ID" value="AAH69665.1"/>
    <property type="molecule type" value="mRNA"/>
</dbReference>
<dbReference type="EMBL" id="BC069726">
    <property type="protein sequence ID" value="AAH69726.1"/>
    <property type="molecule type" value="mRNA"/>
</dbReference>
<dbReference type="EMBL" id="BC069747">
    <property type="protein sequence ID" value="AAH69747.1"/>
    <property type="molecule type" value="mRNA"/>
</dbReference>
<dbReference type="EMBL" id="BC069768">
    <property type="protein sequence ID" value="AAH69768.1"/>
    <property type="molecule type" value="mRNA"/>
</dbReference>
<dbReference type="EMBL" id="BC074794">
    <property type="protein sequence ID" value="AAH74794.2"/>
    <property type="molecule type" value="mRNA"/>
</dbReference>
<dbReference type="EMBL" id="BC113478">
    <property type="protein sequence ID" value="AAI13479.1"/>
    <property type="molecule type" value="mRNA"/>
</dbReference>
<dbReference type="EMBL" id="BC113504">
    <property type="protein sequence ID" value="AAI13505.1"/>
    <property type="molecule type" value="mRNA"/>
</dbReference>
<dbReference type="CCDS" id="CCDS43726.1">
    <molecule id="Q9HAK2-1"/>
</dbReference>
<dbReference type="RefSeq" id="NP_073150.2">
    <molecule id="Q9HAK2-1"/>
    <property type="nucleotide sequence ID" value="NM_022659.4"/>
</dbReference>
<dbReference type="SMR" id="Q9HAK2"/>
<dbReference type="BioGRID" id="122221">
    <property type="interactions" value="66"/>
</dbReference>
<dbReference type="FunCoup" id="Q9HAK2">
    <property type="interactions" value="318"/>
</dbReference>
<dbReference type="IntAct" id="Q9HAK2">
    <property type="interactions" value="57"/>
</dbReference>
<dbReference type="STRING" id="9606.ENSP00000430241"/>
<dbReference type="GlyGen" id="Q9HAK2">
    <property type="glycosylation" value="2 sites, 1 N-linked glycan (1 site)"/>
</dbReference>
<dbReference type="iPTMnet" id="Q9HAK2"/>
<dbReference type="PhosphoSitePlus" id="Q9HAK2"/>
<dbReference type="SwissPalm" id="Q9HAK2"/>
<dbReference type="BioMuta" id="EBF2"/>
<dbReference type="DMDM" id="119370337"/>
<dbReference type="jPOST" id="Q9HAK2"/>
<dbReference type="MassIVE" id="Q9HAK2"/>
<dbReference type="PaxDb" id="9606-ENSP00000430241"/>
<dbReference type="PeptideAtlas" id="Q9HAK2"/>
<dbReference type="ProteomicsDB" id="27076"/>
<dbReference type="ProteomicsDB" id="81409">
    <molecule id="Q9HAK2-1"/>
</dbReference>
<dbReference type="Pumba" id="Q9HAK2"/>
<dbReference type="Antibodypedia" id="22905">
    <property type="antibodies" value="108 antibodies from 21 providers"/>
</dbReference>
<dbReference type="DNASU" id="64641"/>
<dbReference type="Ensembl" id="ENST00000520164.6">
    <molecule id="Q9HAK2-1"/>
    <property type="protein sequence ID" value="ENSP00000430241.1"/>
    <property type="gene ID" value="ENSG00000221818.9"/>
</dbReference>
<dbReference type="Ensembl" id="ENST00000535548.1">
    <molecule id="Q9HAK2-2"/>
    <property type="protein sequence ID" value="ENSP00000437909.1"/>
    <property type="gene ID" value="ENSG00000221818.9"/>
</dbReference>
<dbReference type="GeneID" id="64641"/>
<dbReference type="KEGG" id="hsa:64641"/>
<dbReference type="MANE-Select" id="ENST00000520164.6">
    <property type="protein sequence ID" value="ENSP00000430241.1"/>
    <property type="RefSeq nucleotide sequence ID" value="NM_022659.4"/>
    <property type="RefSeq protein sequence ID" value="NP_073150.2"/>
</dbReference>
<dbReference type="UCSC" id="uc003xes.3">
    <molecule id="Q9HAK2-1"/>
    <property type="organism name" value="human"/>
</dbReference>
<dbReference type="AGR" id="HGNC:19090"/>
<dbReference type="CTD" id="64641"/>
<dbReference type="DisGeNET" id="64641"/>
<dbReference type="GeneCards" id="EBF2"/>
<dbReference type="HGNC" id="HGNC:19090">
    <property type="gene designation" value="EBF2"/>
</dbReference>
<dbReference type="HPA" id="ENSG00000221818">
    <property type="expression patterns" value="Tissue enhanced (adipose)"/>
</dbReference>
<dbReference type="MIM" id="609934">
    <property type="type" value="gene"/>
</dbReference>
<dbReference type="neXtProt" id="NX_Q9HAK2"/>
<dbReference type="OpenTargets" id="ENSG00000221818"/>
<dbReference type="PharmGKB" id="PA38794"/>
<dbReference type="VEuPathDB" id="HostDB:ENSG00000221818"/>
<dbReference type="eggNOG" id="KOG3836">
    <property type="taxonomic scope" value="Eukaryota"/>
</dbReference>
<dbReference type="GeneTree" id="ENSGT00950000182859"/>
<dbReference type="HOGENOM" id="CLU_016320_3_1_1"/>
<dbReference type="InParanoid" id="Q9HAK2"/>
<dbReference type="OMA" id="QGYMRNS"/>
<dbReference type="OrthoDB" id="25246at2759"/>
<dbReference type="PAN-GO" id="Q9HAK2">
    <property type="GO annotations" value="3 GO annotations based on evolutionary models"/>
</dbReference>
<dbReference type="PhylomeDB" id="Q9HAK2"/>
<dbReference type="TreeFam" id="TF313391"/>
<dbReference type="PathwayCommons" id="Q9HAK2"/>
<dbReference type="Reactome" id="R-HSA-9844594">
    <property type="pathway name" value="Transcriptional regulation of brown and beige adipocyte differentiation by EBF2"/>
</dbReference>
<dbReference type="SignaLink" id="Q9HAK2"/>
<dbReference type="BioGRID-ORCS" id="64641">
    <property type="hits" value="19 hits in 1168 CRISPR screens"/>
</dbReference>
<dbReference type="ChiTaRS" id="EBF2">
    <property type="organism name" value="human"/>
</dbReference>
<dbReference type="GenomeRNAi" id="64641"/>
<dbReference type="Pharos" id="Q9HAK2">
    <property type="development level" value="Tbio"/>
</dbReference>
<dbReference type="PRO" id="PR:Q9HAK2"/>
<dbReference type="Proteomes" id="UP000005640">
    <property type="component" value="Chromosome 8"/>
</dbReference>
<dbReference type="RNAct" id="Q9HAK2">
    <property type="molecule type" value="protein"/>
</dbReference>
<dbReference type="Bgee" id="ENSG00000221818">
    <property type="expression patterns" value="Expressed in dorsal root ganglion and 127 other cell types or tissues"/>
</dbReference>
<dbReference type="ExpressionAtlas" id="Q9HAK2">
    <property type="expression patterns" value="baseline and differential"/>
</dbReference>
<dbReference type="GO" id="GO:0000785">
    <property type="term" value="C:chromatin"/>
    <property type="evidence" value="ECO:0000247"/>
    <property type="project" value="NTNU_SB"/>
</dbReference>
<dbReference type="GO" id="GO:0005634">
    <property type="term" value="C:nucleus"/>
    <property type="evidence" value="ECO:0007669"/>
    <property type="project" value="UniProtKB-SubCell"/>
</dbReference>
<dbReference type="GO" id="GO:0003682">
    <property type="term" value="F:chromatin binding"/>
    <property type="evidence" value="ECO:0007669"/>
    <property type="project" value="Ensembl"/>
</dbReference>
<dbReference type="GO" id="GO:0001228">
    <property type="term" value="F:DNA-binding transcription activator activity, RNA polymerase II-specific"/>
    <property type="evidence" value="ECO:0007669"/>
    <property type="project" value="Ensembl"/>
</dbReference>
<dbReference type="GO" id="GO:0000981">
    <property type="term" value="F:DNA-binding transcription factor activity, RNA polymerase II-specific"/>
    <property type="evidence" value="ECO:0000247"/>
    <property type="project" value="NTNU_SB"/>
</dbReference>
<dbReference type="GO" id="GO:0000978">
    <property type="term" value="F:RNA polymerase II cis-regulatory region sequence-specific DNA binding"/>
    <property type="evidence" value="ECO:0000318"/>
    <property type="project" value="GO_Central"/>
</dbReference>
<dbReference type="GO" id="GO:0008270">
    <property type="term" value="F:zinc ion binding"/>
    <property type="evidence" value="ECO:0007669"/>
    <property type="project" value="UniProtKB-KW"/>
</dbReference>
<dbReference type="GO" id="GO:0060612">
    <property type="term" value="P:adipose tissue development"/>
    <property type="evidence" value="ECO:0007669"/>
    <property type="project" value="Ensembl"/>
</dbReference>
<dbReference type="GO" id="GO:0050873">
    <property type="term" value="P:brown fat cell differentiation"/>
    <property type="evidence" value="ECO:0007669"/>
    <property type="project" value="Ensembl"/>
</dbReference>
<dbReference type="GO" id="GO:0001709">
    <property type="term" value="P:cell fate determination"/>
    <property type="evidence" value="ECO:0007669"/>
    <property type="project" value="Ensembl"/>
</dbReference>
<dbReference type="GO" id="GO:0120162">
    <property type="term" value="P:positive regulation of cold-induced thermogenesis"/>
    <property type="evidence" value="ECO:0000250"/>
    <property type="project" value="YuBioLab"/>
</dbReference>
<dbReference type="GO" id="GO:0006357">
    <property type="term" value="P:regulation of transcription by RNA polymerase II"/>
    <property type="evidence" value="ECO:0000318"/>
    <property type="project" value="GO_Central"/>
</dbReference>
<dbReference type="CDD" id="cd11606">
    <property type="entry name" value="COE_DBD"/>
    <property type="match status" value="1"/>
</dbReference>
<dbReference type="CDD" id="cd01175">
    <property type="entry name" value="IPT_COE"/>
    <property type="match status" value="1"/>
</dbReference>
<dbReference type="FunFam" id="1.10.287.4280:FF:000001">
    <property type="entry name" value="transcription factor COE1 isoform X2"/>
    <property type="match status" value="1"/>
</dbReference>
<dbReference type="FunFam" id="2.60.40.3180:FF:000002">
    <property type="entry name" value="transcription factor COE2 isoform X1"/>
    <property type="match status" value="1"/>
</dbReference>
<dbReference type="FunFam" id="2.60.40.10:FF:001696">
    <property type="entry name" value="Transcription factor COE3"/>
    <property type="match status" value="1"/>
</dbReference>
<dbReference type="Gene3D" id="1.10.287.4280">
    <property type="match status" value="1"/>
</dbReference>
<dbReference type="Gene3D" id="2.60.40.10">
    <property type="entry name" value="Immunoglobulins"/>
    <property type="match status" value="1"/>
</dbReference>
<dbReference type="Gene3D" id="2.60.40.3180">
    <property type="entry name" value="Transcription factor COE1, DNA-binding domain"/>
    <property type="match status" value="1"/>
</dbReference>
<dbReference type="InterPro" id="IPR032200">
    <property type="entry name" value="COE_DBD"/>
</dbReference>
<dbReference type="InterPro" id="IPR038173">
    <property type="entry name" value="COE_DBD_sf"/>
</dbReference>
<dbReference type="InterPro" id="IPR032201">
    <property type="entry name" value="COE_HLH"/>
</dbReference>
<dbReference type="InterPro" id="IPR038006">
    <property type="entry name" value="COE_IPT"/>
</dbReference>
<dbReference type="InterPro" id="IPR013783">
    <property type="entry name" value="Ig-like_fold"/>
</dbReference>
<dbReference type="InterPro" id="IPR014756">
    <property type="entry name" value="Ig_E-set"/>
</dbReference>
<dbReference type="InterPro" id="IPR002909">
    <property type="entry name" value="IPT_dom"/>
</dbReference>
<dbReference type="InterPro" id="IPR003523">
    <property type="entry name" value="Transcription_factor_COE"/>
</dbReference>
<dbReference type="InterPro" id="IPR018350">
    <property type="entry name" value="Transcription_factor_COE_CS"/>
</dbReference>
<dbReference type="PANTHER" id="PTHR10747">
    <property type="entry name" value="TRANSCRIPTION FACTOR COE FAMILY MEMBER"/>
    <property type="match status" value="1"/>
</dbReference>
<dbReference type="Pfam" id="PF16422">
    <property type="entry name" value="COE1_DBD"/>
    <property type="match status" value="1"/>
</dbReference>
<dbReference type="Pfam" id="PF16423">
    <property type="entry name" value="COE1_HLH"/>
    <property type="match status" value="1"/>
</dbReference>
<dbReference type="Pfam" id="PF01833">
    <property type="entry name" value="TIG"/>
    <property type="match status" value="1"/>
</dbReference>
<dbReference type="SMART" id="SM00429">
    <property type="entry name" value="IPT"/>
    <property type="match status" value="1"/>
</dbReference>
<dbReference type="SUPFAM" id="SSF81296">
    <property type="entry name" value="E set domains"/>
    <property type="match status" value="1"/>
</dbReference>
<dbReference type="PROSITE" id="PS01345">
    <property type="entry name" value="COE"/>
    <property type="match status" value="1"/>
</dbReference>
<reference key="1">
    <citation type="submission" date="2004-07" db="EMBL/GenBank/DDBJ databases">
        <authorList>
            <person name="Li H."/>
            <person name="Shen C."/>
            <person name="Zhou G."/>
            <person name="Ke R."/>
            <person name="Zhong G."/>
            <person name="Lin L."/>
            <person name="Yang S."/>
        </authorList>
    </citation>
    <scope>NUCLEOTIDE SEQUENCE [MRNA] (ISOFORM 2)</scope>
</reference>
<reference key="2">
    <citation type="journal article" date="2006" name="Nature">
        <title>DNA sequence and analysis of human chromosome 8.</title>
        <authorList>
            <person name="Nusbaum C."/>
            <person name="Mikkelsen T.S."/>
            <person name="Zody M.C."/>
            <person name="Asakawa S."/>
            <person name="Taudien S."/>
            <person name="Garber M."/>
            <person name="Kodira C.D."/>
            <person name="Schueler M.G."/>
            <person name="Shimizu A."/>
            <person name="Whittaker C.A."/>
            <person name="Chang J.L."/>
            <person name="Cuomo C.A."/>
            <person name="Dewar K."/>
            <person name="FitzGerald M.G."/>
            <person name="Yang X."/>
            <person name="Allen N.R."/>
            <person name="Anderson S."/>
            <person name="Asakawa T."/>
            <person name="Blechschmidt K."/>
            <person name="Bloom T."/>
            <person name="Borowsky M.L."/>
            <person name="Butler J."/>
            <person name="Cook A."/>
            <person name="Corum B."/>
            <person name="DeArellano K."/>
            <person name="DeCaprio D."/>
            <person name="Dooley K.T."/>
            <person name="Dorris L. III"/>
            <person name="Engels R."/>
            <person name="Gloeckner G."/>
            <person name="Hafez N."/>
            <person name="Hagopian D.S."/>
            <person name="Hall J.L."/>
            <person name="Ishikawa S.K."/>
            <person name="Jaffe D.B."/>
            <person name="Kamat A."/>
            <person name="Kudoh J."/>
            <person name="Lehmann R."/>
            <person name="Lokitsang T."/>
            <person name="Macdonald P."/>
            <person name="Major J.E."/>
            <person name="Matthews C.D."/>
            <person name="Mauceli E."/>
            <person name="Menzel U."/>
            <person name="Mihalev A.H."/>
            <person name="Minoshima S."/>
            <person name="Murayama Y."/>
            <person name="Naylor J.W."/>
            <person name="Nicol R."/>
            <person name="Nguyen C."/>
            <person name="O'Leary S.B."/>
            <person name="O'Neill K."/>
            <person name="Parker S.C.J."/>
            <person name="Polley A."/>
            <person name="Raymond C.K."/>
            <person name="Reichwald K."/>
            <person name="Rodriguez J."/>
            <person name="Sasaki T."/>
            <person name="Schilhabel M."/>
            <person name="Siddiqui R."/>
            <person name="Smith C.L."/>
            <person name="Sneddon T.P."/>
            <person name="Talamas J.A."/>
            <person name="Tenzin P."/>
            <person name="Topham K."/>
            <person name="Venkataraman V."/>
            <person name="Wen G."/>
            <person name="Yamazaki S."/>
            <person name="Young S.K."/>
            <person name="Zeng Q."/>
            <person name="Zimmer A.R."/>
            <person name="Rosenthal A."/>
            <person name="Birren B.W."/>
            <person name="Platzer M."/>
            <person name="Shimizu N."/>
            <person name="Lander E.S."/>
        </authorList>
    </citation>
    <scope>NUCLEOTIDE SEQUENCE [LARGE SCALE GENOMIC DNA]</scope>
</reference>
<reference key="3">
    <citation type="journal article" date="2004" name="Nat. Genet.">
        <title>Complete sequencing and characterization of 21,243 full-length human cDNAs.</title>
        <authorList>
            <person name="Ota T."/>
            <person name="Suzuki Y."/>
            <person name="Nishikawa T."/>
            <person name="Otsuki T."/>
            <person name="Sugiyama T."/>
            <person name="Irie R."/>
            <person name="Wakamatsu A."/>
            <person name="Hayashi K."/>
            <person name="Sato H."/>
            <person name="Nagai K."/>
            <person name="Kimura K."/>
            <person name="Makita H."/>
            <person name="Sekine M."/>
            <person name="Obayashi M."/>
            <person name="Nishi T."/>
            <person name="Shibahara T."/>
            <person name="Tanaka T."/>
            <person name="Ishii S."/>
            <person name="Yamamoto J."/>
            <person name="Saito K."/>
            <person name="Kawai Y."/>
            <person name="Isono Y."/>
            <person name="Nakamura Y."/>
            <person name="Nagahari K."/>
            <person name="Murakami K."/>
            <person name="Yasuda T."/>
            <person name="Iwayanagi T."/>
            <person name="Wagatsuma M."/>
            <person name="Shiratori A."/>
            <person name="Sudo H."/>
            <person name="Hosoiri T."/>
            <person name="Kaku Y."/>
            <person name="Kodaira H."/>
            <person name="Kondo H."/>
            <person name="Sugawara M."/>
            <person name="Takahashi M."/>
            <person name="Kanda K."/>
            <person name="Yokoi T."/>
            <person name="Furuya T."/>
            <person name="Kikkawa E."/>
            <person name="Omura Y."/>
            <person name="Abe K."/>
            <person name="Kamihara K."/>
            <person name="Katsuta N."/>
            <person name="Sato K."/>
            <person name="Tanikawa M."/>
            <person name="Yamazaki M."/>
            <person name="Ninomiya K."/>
            <person name="Ishibashi T."/>
            <person name="Yamashita H."/>
            <person name="Murakawa K."/>
            <person name="Fujimori K."/>
            <person name="Tanai H."/>
            <person name="Kimata M."/>
            <person name="Watanabe M."/>
            <person name="Hiraoka S."/>
            <person name="Chiba Y."/>
            <person name="Ishida S."/>
            <person name="Ono Y."/>
            <person name="Takiguchi S."/>
            <person name="Watanabe S."/>
            <person name="Yosida M."/>
            <person name="Hotuta T."/>
            <person name="Kusano J."/>
            <person name="Kanehori K."/>
            <person name="Takahashi-Fujii A."/>
            <person name="Hara H."/>
            <person name="Tanase T.-O."/>
            <person name="Nomura Y."/>
            <person name="Togiya S."/>
            <person name="Komai F."/>
            <person name="Hara R."/>
            <person name="Takeuchi K."/>
            <person name="Arita M."/>
            <person name="Imose N."/>
            <person name="Musashino K."/>
            <person name="Yuuki H."/>
            <person name="Oshima A."/>
            <person name="Sasaki N."/>
            <person name="Aotsuka S."/>
            <person name="Yoshikawa Y."/>
            <person name="Matsunawa H."/>
            <person name="Ichihara T."/>
            <person name="Shiohata N."/>
            <person name="Sano S."/>
            <person name="Moriya S."/>
            <person name="Momiyama H."/>
            <person name="Satoh N."/>
            <person name="Takami S."/>
            <person name="Terashima Y."/>
            <person name="Suzuki O."/>
            <person name="Nakagawa S."/>
            <person name="Senoh A."/>
            <person name="Mizoguchi H."/>
            <person name="Goto Y."/>
            <person name="Shimizu F."/>
            <person name="Wakebe H."/>
            <person name="Hishigaki H."/>
            <person name="Watanabe T."/>
            <person name="Sugiyama A."/>
            <person name="Takemoto M."/>
            <person name="Kawakami B."/>
            <person name="Yamazaki M."/>
            <person name="Watanabe K."/>
            <person name="Kumagai A."/>
            <person name="Itakura S."/>
            <person name="Fukuzumi Y."/>
            <person name="Fujimori Y."/>
            <person name="Komiyama M."/>
            <person name="Tashiro H."/>
            <person name="Tanigami A."/>
            <person name="Fujiwara T."/>
            <person name="Ono T."/>
            <person name="Yamada K."/>
            <person name="Fujii Y."/>
            <person name="Ozaki K."/>
            <person name="Hirao M."/>
            <person name="Ohmori Y."/>
            <person name="Kawabata A."/>
            <person name="Hikiji T."/>
            <person name="Kobatake N."/>
            <person name="Inagaki H."/>
            <person name="Ikema Y."/>
            <person name="Okamoto S."/>
            <person name="Okitani R."/>
            <person name="Kawakami T."/>
            <person name="Noguchi S."/>
            <person name="Itoh T."/>
            <person name="Shigeta K."/>
            <person name="Senba T."/>
            <person name="Matsumura K."/>
            <person name="Nakajima Y."/>
            <person name="Mizuno T."/>
            <person name="Morinaga M."/>
            <person name="Sasaki M."/>
            <person name="Togashi T."/>
            <person name="Oyama M."/>
            <person name="Hata H."/>
            <person name="Watanabe M."/>
            <person name="Komatsu T."/>
            <person name="Mizushima-Sugano J."/>
            <person name="Satoh T."/>
            <person name="Shirai Y."/>
            <person name="Takahashi Y."/>
            <person name="Nakagawa K."/>
            <person name="Okumura K."/>
            <person name="Nagase T."/>
            <person name="Nomura N."/>
            <person name="Kikuchi H."/>
            <person name="Masuho Y."/>
            <person name="Yamashita R."/>
            <person name="Nakai K."/>
            <person name="Yada T."/>
            <person name="Nakamura Y."/>
            <person name="Ohara O."/>
            <person name="Isogai T."/>
            <person name="Sugano S."/>
        </authorList>
    </citation>
    <scope>NUCLEOTIDE SEQUENCE [LARGE SCALE MRNA] OF 233-575 (ISOFORM 1)</scope>
    <source>
        <tissue>Embryo</tissue>
    </source>
</reference>
<reference key="4">
    <citation type="journal article" date="2004" name="Genome Res.">
        <title>The status, quality, and expansion of the NIH full-length cDNA project: the Mammalian Gene Collection (MGC).</title>
        <authorList>
            <consortium name="The MGC Project Team"/>
        </authorList>
    </citation>
    <scope>NUCLEOTIDE SEQUENCE [LARGE SCALE MRNA] OF 240-575 (ISOFORM 1)</scope>
    <source>
        <tissue>Brain</tissue>
        <tissue>Fetal brain</tissue>
    </source>
</reference>
<reference key="5">
    <citation type="journal article" date="2016" name="PLoS Genet.">
        <title>Comparative Transcriptomic and Epigenomic Analyses Reveal New Regulators of Murine Brown Adipogenesis.</title>
        <authorList>
            <person name="Brunmeir R."/>
            <person name="Wu J."/>
            <person name="Peng X."/>
            <person name="Kim S.Y."/>
            <person name="Julien S.G."/>
            <person name="Zhang Q."/>
            <person name="Xie W."/>
            <person name="Xu F."/>
        </authorList>
    </citation>
    <scope>INTERACTION WITH SIX1</scope>
</reference>